<feature type="chain" id="PRO_1000063803" description="3-isopropylmalate dehydratase small subunit">
    <location>
        <begin position="1"/>
        <end position="216"/>
    </location>
</feature>
<sequence>MQKFTVHQGLVAPMDRENVDTDAIIPKQFLKSIRKTGFGPNLFDEWRYLDAGFPGQDPASRKPNPDFVLNQARYKGASILLARKNFGCGSSREHAPWALDQFGFRAIIAPSYADIFFNNSFKNGLLPIVLPEAQVAQLFDEALAFPGYTLTIDLERQVIVKAQGEELPFDVQAFRKYCLLNGFDDIGLTLLQSDKIKAFEAQRLAGKPWLSHTVAG</sequence>
<comment type="function">
    <text evidence="1">Catalyzes the isomerization between 2-isopropylmalate and 3-isopropylmalate, via the formation of 2-isopropylmaleate.</text>
</comment>
<comment type="catalytic activity">
    <reaction evidence="1">
        <text>(2R,3S)-3-isopropylmalate = (2S)-2-isopropylmalate</text>
        <dbReference type="Rhea" id="RHEA:32287"/>
        <dbReference type="ChEBI" id="CHEBI:1178"/>
        <dbReference type="ChEBI" id="CHEBI:35121"/>
        <dbReference type="EC" id="4.2.1.33"/>
    </reaction>
</comment>
<comment type="pathway">
    <text evidence="1">Amino-acid biosynthesis; L-leucine biosynthesis; L-leucine from 3-methyl-2-oxobutanoate: step 2/4.</text>
</comment>
<comment type="subunit">
    <text evidence="1">Heterodimer of LeuC and LeuD.</text>
</comment>
<comment type="similarity">
    <text evidence="1">Belongs to the LeuD family. LeuD type 1 subfamily.</text>
</comment>
<evidence type="ECO:0000255" key="1">
    <source>
        <dbReference type="HAMAP-Rule" id="MF_01031"/>
    </source>
</evidence>
<name>LEUD_POLNA</name>
<gene>
    <name evidence="1" type="primary">leuD</name>
    <name type="ordered locus">Pnap_3040</name>
</gene>
<accession>A1VRR1</accession>
<keyword id="KW-0028">Amino-acid biosynthesis</keyword>
<keyword id="KW-0100">Branched-chain amino acid biosynthesis</keyword>
<keyword id="KW-0432">Leucine biosynthesis</keyword>
<keyword id="KW-0456">Lyase</keyword>
<keyword id="KW-1185">Reference proteome</keyword>
<reference key="1">
    <citation type="journal article" date="2009" name="Environ. Microbiol.">
        <title>The genome of Polaromonas naphthalenivorans strain CJ2, isolated from coal tar-contaminated sediment, reveals physiological and metabolic versatility and evolution through extensive horizontal gene transfer.</title>
        <authorList>
            <person name="Yagi J.M."/>
            <person name="Sims D."/>
            <person name="Brettin T."/>
            <person name="Bruce D."/>
            <person name="Madsen E.L."/>
        </authorList>
    </citation>
    <scope>NUCLEOTIDE SEQUENCE [LARGE SCALE GENOMIC DNA]</scope>
    <source>
        <strain>CJ2</strain>
    </source>
</reference>
<dbReference type="EC" id="4.2.1.33" evidence="1"/>
<dbReference type="EMBL" id="CP000529">
    <property type="protein sequence ID" value="ABM38339.1"/>
    <property type="molecule type" value="Genomic_DNA"/>
</dbReference>
<dbReference type="RefSeq" id="WP_011802411.1">
    <property type="nucleotide sequence ID" value="NC_008781.1"/>
</dbReference>
<dbReference type="SMR" id="A1VRR1"/>
<dbReference type="STRING" id="365044.Pnap_3040"/>
<dbReference type="KEGG" id="pna:Pnap_3040"/>
<dbReference type="eggNOG" id="COG0066">
    <property type="taxonomic scope" value="Bacteria"/>
</dbReference>
<dbReference type="HOGENOM" id="CLU_081378_0_3_4"/>
<dbReference type="OrthoDB" id="9777465at2"/>
<dbReference type="UniPathway" id="UPA00048">
    <property type="reaction ID" value="UER00071"/>
</dbReference>
<dbReference type="Proteomes" id="UP000000644">
    <property type="component" value="Chromosome"/>
</dbReference>
<dbReference type="GO" id="GO:0009316">
    <property type="term" value="C:3-isopropylmalate dehydratase complex"/>
    <property type="evidence" value="ECO:0007669"/>
    <property type="project" value="InterPro"/>
</dbReference>
<dbReference type="GO" id="GO:0003861">
    <property type="term" value="F:3-isopropylmalate dehydratase activity"/>
    <property type="evidence" value="ECO:0007669"/>
    <property type="project" value="UniProtKB-UniRule"/>
</dbReference>
<dbReference type="GO" id="GO:0009098">
    <property type="term" value="P:L-leucine biosynthetic process"/>
    <property type="evidence" value="ECO:0007669"/>
    <property type="project" value="UniProtKB-UniRule"/>
</dbReference>
<dbReference type="CDD" id="cd01577">
    <property type="entry name" value="IPMI_Swivel"/>
    <property type="match status" value="1"/>
</dbReference>
<dbReference type="FunFam" id="3.20.19.10:FF:000003">
    <property type="entry name" value="3-isopropylmalate dehydratase small subunit"/>
    <property type="match status" value="1"/>
</dbReference>
<dbReference type="Gene3D" id="3.20.19.10">
    <property type="entry name" value="Aconitase, domain 4"/>
    <property type="match status" value="1"/>
</dbReference>
<dbReference type="HAMAP" id="MF_01031">
    <property type="entry name" value="LeuD_type1"/>
    <property type="match status" value="1"/>
</dbReference>
<dbReference type="InterPro" id="IPR004431">
    <property type="entry name" value="3-IsopropMal_deHydase_ssu"/>
</dbReference>
<dbReference type="InterPro" id="IPR015928">
    <property type="entry name" value="Aconitase/3IPM_dehydase_swvl"/>
</dbReference>
<dbReference type="InterPro" id="IPR000573">
    <property type="entry name" value="AconitaseA/IPMdHydase_ssu_swvl"/>
</dbReference>
<dbReference type="InterPro" id="IPR033940">
    <property type="entry name" value="IPMI_Swivel"/>
</dbReference>
<dbReference type="InterPro" id="IPR050075">
    <property type="entry name" value="LeuD"/>
</dbReference>
<dbReference type="NCBIfam" id="TIGR00171">
    <property type="entry name" value="leuD"/>
    <property type="match status" value="1"/>
</dbReference>
<dbReference type="NCBIfam" id="NF002458">
    <property type="entry name" value="PRK01641.1"/>
    <property type="match status" value="1"/>
</dbReference>
<dbReference type="PANTHER" id="PTHR43345:SF5">
    <property type="entry name" value="3-ISOPROPYLMALATE DEHYDRATASE SMALL SUBUNIT"/>
    <property type="match status" value="1"/>
</dbReference>
<dbReference type="PANTHER" id="PTHR43345">
    <property type="entry name" value="3-ISOPROPYLMALATE DEHYDRATASE SMALL SUBUNIT 2-RELATED-RELATED"/>
    <property type="match status" value="1"/>
</dbReference>
<dbReference type="Pfam" id="PF00694">
    <property type="entry name" value="Aconitase_C"/>
    <property type="match status" value="1"/>
</dbReference>
<dbReference type="SUPFAM" id="SSF52016">
    <property type="entry name" value="LeuD/IlvD-like"/>
    <property type="match status" value="1"/>
</dbReference>
<proteinExistence type="inferred from homology"/>
<organism>
    <name type="scientific">Polaromonas naphthalenivorans (strain CJ2)</name>
    <dbReference type="NCBI Taxonomy" id="365044"/>
    <lineage>
        <taxon>Bacteria</taxon>
        <taxon>Pseudomonadati</taxon>
        <taxon>Pseudomonadota</taxon>
        <taxon>Betaproteobacteria</taxon>
        <taxon>Burkholderiales</taxon>
        <taxon>Comamonadaceae</taxon>
        <taxon>Polaromonas</taxon>
    </lineage>
</organism>
<protein>
    <recommendedName>
        <fullName evidence="1">3-isopropylmalate dehydratase small subunit</fullName>
        <ecNumber evidence="1">4.2.1.33</ecNumber>
    </recommendedName>
    <alternativeName>
        <fullName evidence="1">Alpha-IPM isomerase</fullName>
        <shortName evidence="1">IPMI</shortName>
    </alternativeName>
    <alternativeName>
        <fullName evidence="1">Isopropylmalate isomerase</fullName>
    </alternativeName>
</protein>